<comment type="function">
    <text evidence="1">Catalyzes the NADPH-dependent reduction of L-glutamate 5-phosphate into L-glutamate 5-semialdehyde and phosphate. The product spontaneously undergoes cyclization to form 1-pyrroline-5-carboxylate.</text>
</comment>
<comment type="catalytic activity">
    <reaction evidence="1">
        <text>L-glutamate 5-semialdehyde + phosphate + NADP(+) = L-glutamyl 5-phosphate + NADPH + H(+)</text>
        <dbReference type="Rhea" id="RHEA:19541"/>
        <dbReference type="ChEBI" id="CHEBI:15378"/>
        <dbReference type="ChEBI" id="CHEBI:43474"/>
        <dbReference type="ChEBI" id="CHEBI:57783"/>
        <dbReference type="ChEBI" id="CHEBI:58066"/>
        <dbReference type="ChEBI" id="CHEBI:58274"/>
        <dbReference type="ChEBI" id="CHEBI:58349"/>
        <dbReference type="EC" id="1.2.1.41"/>
    </reaction>
</comment>
<comment type="pathway">
    <text evidence="1">Amino-acid biosynthesis; L-proline biosynthesis; L-glutamate 5-semialdehyde from L-glutamate: step 2/2.</text>
</comment>
<comment type="subcellular location">
    <subcellularLocation>
        <location evidence="1">Cytoplasm</location>
    </subcellularLocation>
</comment>
<comment type="similarity">
    <text evidence="1">Belongs to the gamma-glutamyl phosphate reductase family.</text>
</comment>
<dbReference type="EC" id="1.2.1.41" evidence="1"/>
<dbReference type="EMBL" id="CP000133">
    <property type="protein sequence ID" value="ABC92812.1"/>
    <property type="molecule type" value="Genomic_DNA"/>
</dbReference>
<dbReference type="RefSeq" id="WP_011427252.1">
    <property type="nucleotide sequence ID" value="NC_007761.1"/>
</dbReference>
<dbReference type="SMR" id="Q2K2X4"/>
<dbReference type="KEGG" id="ret:RHE_CH04069"/>
<dbReference type="eggNOG" id="COG0014">
    <property type="taxonomic scope" value="Bacteria"/>
</dbReference>
<dbReference type="HOGENOM" id="CLU_030231_0_0_5"/>
<dbReference type="OrthoDB" id="9809970at2"/>
<dbReference type="UniPathway" id="UPA00098">
    <property type="reaction ID" value="UER00360"/>
</dbReference>
<dbReference type="Proteomes" id="UP000001936">
    <property type="component" value="Chromosome"/>
</dbReference>
<dbReference type="GO" id="GO:0005737">
    <property type="term" value="C:cytoplasm"/>
    <property type="evidence" value="ECO:0007669"/>
    <property type="project" value="UniProtKB-SubCell"/>
</dbReference>
<dbReference type="GO" id="GO:0004350">
    <property type="term" value="F:glutamate-5-semialdehyde dehydrogenase activity"/>
    <property type="evidence" value="ECO:0007669"/>
    <property type="project" value="UniProtKB-UniRule"/>
</dbReference>
<dbReference type="GO" id="GO:0050661">
    <property type="term" value="F:NADP binding"/>
    <property type="evidence" value="ECO:0007669"/>
    <property type="project" value="InterPro"/>
</dbReference>
<dbReference type="GO" id="GO:0055129">
    <property type="term" value="P:L-proline biosynthetic process"/>
    <property type="evidence" value="ECO:0007669"/>
    <property type="project" value="UniProtKB-UniRule"/>
</dbReference>
<dbReference type="CDD" id="cd07079">
    <property type="entry name" value="ALDH_F18-19_ProA-GPR"/>
    <property type="match status" value="1"/>
</dbReference>
<dbReference type="Gene3D" id="3.40.605.10">
    <property type="entry name" value="Aldehyde Dehydrogenase, Chain A, domain 1"/>
    <property type="match status" value="1"/>
</dbReference>
<dbReference type="Gene3D" id="3.40.309.10">
    <property type="entry name" value="Aldehyde Dehydrogenase, Chain A, domain 2"/>
    <property type="match status" value="1"/>
</dbReference>
<dbReference type="HAMAP" id="MF_00412">
    <property type="entry name" value="ProA"/>
    <property type="match status" value="1"/>
</dbReference>
<dbReference type="InterPro" id="IPR016161">
    <property type="entry name" value="Ald_DH/histidinol_DH"/>
</dbReference>
<dbReference type="InterPro" id="IPR016163">
    <property type="entry name" value="Ald_DH_C"/>
</dbReference>
<dbReference type="InterPro" id="IPR016162">
    <property type="entry name" value="Ald_DH_N"/>
</dbReference>
<dbReference type="InterPro" id="IPR015590">
    <property type="entry name" value="Aldehyde_DH_dom"/>
</dbReference>
<dbReference type="InterPro" id="IPR020593">
    <property type="entry name" value="G-glutamylP_reductase_CS"/>
</dbReference>
<dbReference type="InterPro" id="IPR012134">
    <property type="entry name" value="Glu-5-SA_DH"/>
</dbReference>
<dbReference type="InterPro" id="IPR000965">
    <property type="entry name" value="GPR_dom"/>
</dbReference>
<dbReference type="NCBIfam" id="NF001221">
    <property type="entry name" value="PRK00197.1"/>
    <property type="match status" value="1"/>
</dbReference>
<dbReference type="NCBIfam" id="TIGR00407">
    <property type="entry name" value="proA"/>
    <property type="match status" value="1"/>
</dbReference>
<dbReference type="PANTHER" id="PTHR11063:SF8">
    <property type="entry name" value="DELTA-1-PYRROLINE-5-CARBOXYLATE SYNTHASE"/>
    <property type="match status" value="1"/>
</dbReference>
<dbReference type="PANTHER" id="PTHR11063">
    <property type="entry name" value="GLUTAMATE SEMIALDEHYDE DEHYDROGENASE"/>
    <property type="match status" value="1"/>
</dbReference>
<dbReference type="Pfam" id="PF00171">
    <property type="entry name" value="Aldedh"/>
    <property type="match status" value="1"/>
</dbReference>
<dbReference type="PIRSF" id="PIRSF000151">
    <property type="entry name" value="GPR"/>
    <property type="match status" value="1"/>
</dbReference>
<dbReference type="SUPFAM" id="SSF53720">
    <property type="entry name" value="ALDH-like"/>
    <property type="match status" value="1"/>
</dbReference>
<dbReference type="PROSITE" id="PS01223">
    <property type="entry name" value="PROA"/>
    <property type="match status" value="1"/>
</dbReference>
<accession>Q2K2X4</accession>
<name>PROA_RHIEC</name>
<feature type="chain" id="PRO_0000252584" description="Gamma-glutamyl phosphate reductase">
    <location>
        <begin position="1"/>
        <end position="427"/>
    </location>
</feature>
<gene>
    <name evidence="1" type="primary">proA</name>
    <name type="ordered locus">RHE_CH04069</name>
</gene>
<keyword id="KW-0028">Amino-acid biosynthesis</keyword>
<keyword id="KW-0963">Cytoplasm</keyword>
<keyword id="KW-0521">NADP</keyword>
<keyword id="KW-0560">Oxidoreductase</keyword>
<keyword id="KW-0641">Proline biosynthesis</keyword>
<keyword id="KW-1185">Reference proteome</keyword>
<organism>
    <name type="scientific">Rhizobium etli (strain ATCC 51251 / DSM 11541 / JCM 21823 / NBRC 15573 / CFN 42)</name>
    <dbReference type="NCBI Taxonomy" id="347834"/>
    <lineage>
        <taxon>Bacteria</taxon>
        <taxon>Pseudomonadati</taxon>
        <taxon>Pseudomonadota</taxon>
        <taxon>Alphaproteobacteria</taxon>
        <taxon>Hyphomicrobiales</taxon>
        <taxon>Rhizobiaceae</taxon>
        <taxon>Rhizobium/Agrobacterium group</taxon>
        <taxon>Rhizobium</taxon>
    </lineage>
</organism>
<protein>
    <recommendedName>
        <fullName evidence="1">Gamma-glutamyl phosphate reductase</fullName>
        <shortName evidence="1">GPR</shortName>
        <ecNumber evidence="1">1.2.1.41</ecNumber>
    </recommendedName>
    <alternativeName>
        <fullName evidence="1">Glutamate-5-semialdehyde dehydrogenase</fullName>
    </alternativeName>
    <alternativeName>
        <fullName evidence="1">Glutamyl-gamma-semialdehyde dehydrogenase</fullName>
        <shortName evidence="1">GSA dehydrogenase</shortName>
    </alternativeName>
</protein>
<evidence type="ECO:0000255" key="1">
    <source>
        <dbReference type="HAMAP-Rule" id="MF_00412"/>
    </source>
</evidence>
<reference key="1">
    <citation type="journal article" date="2006" name="Proc. Natl. Acad. Sci. U.S.A.">
        <title>The partitioned Rhizobium etli genome: genetic and metabolic redundancy in seven interacting replicons.</title>
        <authorList>
            <person name="Gonzalez V."/>
            <person name="Santamaria R.I."/>
            <person name="Bustos P."/>
            <person name="Hernandez-Gonzalez I."/>
            <person name="Medrano-Soto A."/>
            <person name="Moreno-Hagelsieb G."/>
            <person name="Janga S.C."/>
            <person name="Ramirez M.A."/>
            <person name="Jimenez-Jacinto V."/>
            <person name="Collado-Vides J."/>
            <person name="Davila G."/>
        </authorList>
    </citation>
    <scope>NUCLEOTIDE SEQUENCE [LARGE SCALE GENOMIC DNA]</scope>
    <source>
        <strain>ATCC 51251 / DSM 11541 / JCM 21823 / NBRC 15573 / CFN 42</strain>
    </source>
</reference>
<proteinExistence type="inferred from homology"/>
<sequence>MLDTVAPSPDIDALMNDIGRKAKAAARPLGFASTEAKNKALNAMADAIMANKAHILAENAKDLKDIEGSETLASFVDRLTLNDKRIAEMAEGIRAIAALADPVGEVIAAWDRPNGLKIERVRTPLGVIGVIFESRPNVTADAGALCLKAGNAVILRCGSDSRRSSQAIHVCMVEGLKAAGLPEHAIQLVPVTDRAAVGAMLRGLEGAIDVIVPRGGKSLVARVQNEARVPVFAHLEGLCHIYVDASADLEMAKKIVVNAKMRRTGICGAAETLLVDGAAIDTHLTPLLEVLTDAGCEIRASAAVLKVAPGLKTATEEDWSTEYLDAIISVATVDGISGAIAHIQTYSSNHTEAVIAEDPAVVQRFFTEVDSAILLHNASTQFADGGEFGMGAEIGIATGKMHARGPVGVEQLTSFKYRVRGAGQTRP</sequence>